<accession>P21829</accession>
<protein>
    <recommendedName>
        <fullName>Pyridoxal phosphate phosphatase YbhA</fullName>
        <shortName>PLP phosphatase</shortName>
        <ecNumber>3.1.3.74</ecNumber>
    </recommendedName>
</protein>
<comment type="function">
    <text evidence="2 3">Catalyzes the dephosphorylation of pyridoxal-phosphate (PLP). Can also hydrolyze erythrose-4-phosphate (Ery4P) and fructose-1,6-bis-phosphate (Fru1,6bisP).</text>
</comment>
<comment type="catalytic activity">
    <reaction evidence="3">
        <text>pyridoxal 5'-phosphate + H2O = pyridoxal + phosphate</text>
        <dbReference type="Rhea" id="RHEA:20533"/>
        <dbReference type="ChEBI" id="CHEBI:15377"/>
        <dbReference type="ChEBI" id="CHEBI:17310"/>
        <dbReference type="ChEBI" id="CHEBI:43474"/>
        <dbReference type="ChEBI" id="CHEBI:597326"/>
        <dbReference type="EC" id="3.1.3.74"/>
    </reaction>
</comment>
<comment type="cofactor">
    <cofactor evidence="3">
        <name>Mg(2+)</name>
        <dbReference type="ChEBI" id="CHEBI:18420"/>
    </cofactor>
    <cofactor evidence="3">
        <name>Mn(2+)</name>
        <dbReference type="ChEBI" id="CHEBI:29035"/>
    </cofactor>
    <cofactor evidence="3">
        <name>Co(2+)</name>
        <dbReference type="ChEBI" id="CHEBI:48828"/>
    </cofactor>
    <cofactor evidence="3">
        <name>Zn(2+)</name>
        <dbReference type="ChEBI" id="CHEBI:29105"/>
    </cofactor>
    <text evidence="3">Magnesium. Can also use other divalent metal cations as manganese, cobalt or zinc.</text>
</comment>
<comment type="biophysicochemical properties">
    <kinetics>
        <KM evidence="3">0.37 mM for PLP (in the presence of magnesium ion as cofactor and at pH 9)</KM>
        <KM evidence="3">1.3 mM for Fru1,6bisP (in the presence of magnesium ion as cofactor and at pH 9)</KM>
    </kinetics>
    <phDependence>
        <text evidence="3">Optimum pH is between 6 and 7.5.</text>
    </phDependence>
</comment>
<comment type="similarity">
    <text evidence="4">Belongs to the HAD-like hydrolase superfamily. CbbY/CbbZ/Gph/YieH family.</text>
</comment>
<comment type="caution">
    <text evidence="4">This ORF is coded on the other strand of an ORF which has been called modD (by PubMed:7665460 and PubMed:8564363), but which seems to be wrong.</text>
</comment>
<comment type="sequence caution" evidence="4">
    <conflict type="frameshift">
        <sequence resource="EMBL" id="U07867"/>
    </conflict>
</comment>
<proteinExistence type="evidence at protein level"/>
<reference key="1">
    <citation type="journal article" date="1995" name="J. Bacteriol.">
        <title>Genetic analysis of the modABCD (molybdate transport) operon of Escherichia coli.</title>
        <authorList>
            <person name="Maupin-Furlow J.A."/>
            <person name="Rosentel J.K."/>
            <person name="Lee J.H."/>
            <person name="Deppenmeier U."/>
            <person name="Gunsalus R.P."/>
            <person name="Shanmugam K.T."/>
        </authorList>
    </citation>
    <scope>NUCLEOTIDE SEQUENCE [GENOMIC DNA]</scope>
    <source>
        <strain>K12</strain>
    </source>
</reference>
<reference key="2">
    <citation type="journal article" date="1995" name="Microbiol. Res.">
        <title>Molecular analysis of the molybdate uptake operon, modABCD, of Escherichia coli and modR, a regulatory gene.</title>
        <authorList>
            <person name="Walkenhorst H.M."/>
            <person name="Hemschemeier S.K."/>
            <person name="Eichenlaub R."/>
        </authorList>
    </citation>
    <scope>NUCLEOTIDE SEQUENCE [GENOMIC DNA]</scope>
    <source>
        <strain>K12 / MC1000 / ATCC 39531</strain>
    </source>
</reference>
<reference key="3">
    <citation type="journal article" date="1996" name="DNA Res.">
        <title>A 718-kb DNA sequence of the Escherichia coli K-12 genome corresponding to the 12.7-28.0 min region on the linkage map.</title>
        <authorList>
            <person name="Oshima T."/>
            <person name="Aiba H."/>
            <person name="Baba T."/>
            <person name="Fujita K."/>
            <person name="Hayashi K."/>
            <person name="Honjo A."/>
            <person name="Ikemoto K."/>
            <person name="Inada T."/>
            <person name="Itoh T."/>
            <person name="Kajihara M."/>
            <person name="Kanai K."/>
            <person name="Kashimoto K."/>
            <person name="Kimura S."/>
            <person name="Kitagawa M."/>
            <person name="Makino K."/>
            <person name="Masuda S."/>
            <person name="Miki T."/>
            <person name="Mizobuchi K."/>
            <person name="Mori H."/>
            <person name="Motomura K."/>
            <person name="Nakamura Y."/>
            <person name="Nashimoto H."/>
            <person name="Nishio Y."/>
            <person name="Saito N."/>
            <person name="Sampei G."/>
            <person name="Seki Y."/>
            <person name="Tagami H."/>
            <person name="Takemoto K."/>
            <person name="Wada C."/>
            <person name="Yamamoto Y."/>
            <person name="Yano M."/>
            <person name="Horiuchi T."/>
        </authorList>
    </citation>
    <scope>NUCLEOTIDE SEQUENCE [LARGE SCALE GENOMIC DNA]</scope>
    <source>
        <strain>K12 / W3110 / ATCC 27325 / DSM 5911</strain>
    </source>
</reference>
<reference key="4">
    <citation type="journal article" date="1997" name="Science">
        <title>The complete genome sequence of Escherichia coli K-12.</title>
        <authorList>
            <person name="Blattner F.R."/>
            <person name="Plunkett G. III"/>
            <person name="Bloch C.A."/>
            <person name="Perna N.T."/>
            <person name="Burland V."/>
            <person name="Riley M."/>
            <person name="Collado-Vides J."/>
            <person name="Glasner J.D."/>
            <person name="Rode C.K."/>
            <person name="Mayhew G.F."/>
            <person name="Gregor J."/>
            <person name="Davis N.W."/>
            <person name="Kirkpatrick H.A."/>
            <person name="Goeden M.A."/>
            <person name="Rose D.J."/>
            <person name="Mau B."/>
            <person name="Shao Y."/>
        </authorList>
    </citation>
    <scope>NUCLEOTIDE SEQUENCE [LARGE SCALE GENOMIC DNA]</scope>
    <source>
        <strain>K12 / MG1655 / ATCC 47076</strain>
    </source>
</reference>
<reference key="5">
    <citation type="journal article" date="2006" name="Mol. Syst. Biol.">
        <title>Highly accurate genome sequences of Escherichia coli K-12 strains MG1655 and W3110.</title>
        <authorList>
            <person name="Hayashi K."/>
            <person name="Morooka N."/>
            <person name="Yamamoto Y."/>
            <person name="Fujita K."/>
            <person name="Isono K."/>
            <person name="Choi S."/>
            <person name="Ohtsubo E."/>
            <person name="Baba T."/>
            <person name="Wanner B.L."/>
            <person name="Mori H."/>
            <person name="Horiuchi T."/>
        </authorList>
    </citation>
    <scope>NUCLEOTIDE SEQUENCE [LARGE SCALE GENOMIC DNA]</scope>
    <source>
        <strain>K12 / W3110 / ATCC 27325 / DSM 5911</strain>
    </source>
</reference>
<reference key="6">
    <citation type="journal article" date="2005" name="FEMS Microbiol. Rev.">
        <title>Enzyme genomics: application of general enzymatic screens to discover new enzymes.</title>
        <authorList>
            <person name="Kuznetsova E."/>
            <person name="Proudfoot M."/>
            <person name="Sanders S.A."/>
            <person name="Reinking J."/>
            <person name="Savchenko A."/>
            <person name="Arrowsmith C.H."/>
            <person name="Edwards A.M."/>
            <person name="Yakunin A.F."/>
        </authorList>
    </citation>
    <scope>FUNCTION AS A PHOSPHATASE</scope>
</reference>
<reference key="7">
    <citation type="journal article" date="2006" name="J. Biol. Chem.">
        <title>Genome-wide analysis of substrate specificities of the Escherichia coli haloacid dehalogenase-like phosphatase family.</title>
        <authorList>
            <person name="Kuznetsova E."/>
            <person name="Proudfoot M."/>
            <person name="Gonzalez C.F."/>
            <person name="Brown G."/>
            <person name="Omelchenko M.V."/>
            <person name="Borozan I."/>
            <person name="Carmel L."/>
            <person name="Wolf Y.I."/>
            <person name="Mori H."/>
            <person name="Savchenko A.V."/>
            <person name="Arrowsmith C.H."/>
            <person name="Koonin E.V."/>
            <person name="Edwards A.M."/>
            <person name="Yakunin A.F."/>
        </authorList>
    </citation>
    <scope>FUNCTION AS A PHOSPHATASE</scope>
    <scope>CATALYTIC ACTIVITY</scope>
    <scope>BIOPHYSICOCHEMICAL PROPERTIES</scope>
    <scope>SUBSTRATE SPECIFICITY</scope>
    <scope>COFACTOR</scope>
</reference>
<feature type="chain" id="PRO_0000054420" description="Pyridoxal phosphate phosphatase YbhA">
    <location>
        <begin position="1"/>
        <end position="272"/>
    </location>
</feature>
<feature type="active site" description="Nucleophile" evidence="1">
    <location>
        <position position="9"/>
    </location>
</feature>
<feature type="binding site" evidence="1">
    <location>
        <position position="9"/>
    </location>
    <ligand>
        <name>Mg(2+)</name>
        <dbReference type="ChEBI" id="CHEBI:18420"/>
    </ligand>
</feature>
<feature type="binding site" evidence="1">
    <location>
        <position position="10"/>
    </location>
    <ligand>
        <name>phosphate</name>
        <dbReference type="ChEBI" id="CHEBI:43474"/>
    </ligand>
</feature>
<feature type="binding site" evidence="1">
    <location>
        <position position="11"/>
    </location>
    <ligand>
        <name>Mg(2+)</name>
        <dbReference type="ChEBI" id="CHEBI:18420"/>
    </ligand>
</feature>
<feature type="binding site" evidence="1">
    <location>
        <begin position="43"/>
        <end position="44"/>
    </location>
    <ligand>
        <name>phosphate</name>
        <dbReference type="ChEBI" id="CHEBI:43474"/>
    </ligand>
</feature>
<feature type="binding site" evidence="1">
    <location>
        <position position="200"/>
    </location>
    <ligand>
        <name>phosphate</name>
        <dbReference type="ChEBI" id="CHEBI:43474"/>
    </ligand>
</feature>
<feature type="binding site" evidence="1">
    <location>
        <position position="223"/>
    </location>
    <ligand>
        <name>Mg(2+)</name>
        <dbReference type="ChEBI" id="CHEBI:18420"/>
    </ligand>
</feature>
<feature type="binding site" evidence="1">
    <location>
        <position position="226"/>
    </location>
    <ligand>
        <name>phosphate</name>
        <dbReference type="ChEBI" id="CHEBI:43474"/>
    </ligand>
</feature>
<keyword id="KW-0378">Hydrolase</keyword>
<keyword id="KW-0460">Magnesium</keyword>
<keyword id="KW-0479">Metal-binding</keyword>
<keyword id="KW-1185">Reference proteome</keyword>
<organism>
    <name type="scientific">Escherichia coli (strain K12)</name>
    <dbReference type="NCBI Taxonomy" id="83333"/>
    <lineage>
        <taxon>Bacteria</taxon>
        <taxon>Pseudomonadati</taxon>
        <taxon>Pseudomonadota</taxon>
        <taxon>Gammaproteobacteria</taxon>
        <taxon>Enterobacterales</taxon>
        <taxon>Enterobacteriaceae</taxon>
        <taxon>Escherichia</taxon>
    </lineage>
</organism>
<evidence type="ECO:0000250" key="1"/>
<evidence type="ECO:0000269" key="2">
    <source>
    </source>
</evidence>
<evidence type="ECO:0000269" key="3">
    <source>
    </source>
</evidence>
<evidence type="ECO:0000305" key="4"/>
<name>YBHA_ECOLI</name>
<gene>
    <name type="primary">ybhA</name>
    <name type="ordered locus">b0766</name>
    <name type="ordered locus">JW0749</name>
</gene>
<dbReference type="EC" id="3.1.3.74"/>
<dbReference type="EMBL" id="U27192">
    <property type="protein sequence ID" value="AAB60177.1"/>
    <property type="molecule type" value="Genomic_DNA"/>
</dbReference>
<dbReference type="EMBL" id="U07867">
    <property type="status" value="NOT_ANNOTATED_CDS"/>
    <property type="molecule type" value="Genomic_DNA"/>
</dbReference>
<dbReference type="EMBL" id="U00096">
    <property type="protein sequence ID" value="AAC73853.1"/>
    <property type="molecule type" value="Genomic_DNA"/>
</dbReference>
<dbReference type="EMBL" id="AP009048">
    <property type="protein sequence ID" value="BAA35430.1"/>
    <property type="molecule type" value="Genomic_DNA"/>
</dbReference>
<dbReference type="PIR" id="F64812">
    <property type="entry name" value="F64812"/>
</dbReference>
<dbReference type="RefSeq" id="NP_415287.1">
    <property type="nucleotide sequence ID" value="NC_000913.3"/>
</dbReference>
<dbReference type="RefSeq" id="WP_001300666.1">
    <property type="nucleotide sequence ID" value="NZ_LN832404.1"/>
</dbReference>
<dbReference type="SMR" id="P21829"/>
<dbReference type="BioGRID" id="4261146">
    <property type="interactions" value="15"/>
</dbReference>
<dbReference type="FunCoup" id="P21829">
    <property type="interactions" value="29"/>
</dbReference>
<dbReference type="IntAct" id="P21829">
    <property type="interactions" value="3"/>
</dbReference>
<dbReference type="STRING" id="511145.b0766"/>
<dbReference type="jPOST" id="P21829"/>
<dbReference type="PaxDb" id="511145-b0766"/>
<dbReference type="DNASU" id="945372"/>
<dbReference type="EnsemblBacteria" id="AAC73853">
    <property type="protein sequence ID" value="AAC73853"/>
    <property type="gene ID" value="b0766"/>
</dbReference>
<dbReference type="GeneID" id="945372"/>
<dbReference type="KEGG" id="ecj:JW0749"/>
<dbReference type="KEGG" id="eco:b0766"/>
<dbReference type="KEGG" id="ecoc:C3026_03885"/>
<dbReference type="PATRIC" id="fig|1411691.4.peg.1512"/>
<dbReference type="EchoBASE" id="EB1221"/>
<dbReference type="eggNOG" id="COG0561">
    <property type="taxonomic scope" value="Bacteria"/>
</dbReference>
<dbReference type="HOGENOM" id="CLU_044146_1_0_6"/>
<dbReference type="InParanoid" id="P21829"/>
<dbReference type="OMA" id="FSCEWSW"/>
<dbReference type="OrthoDB" id="9781413at2"/>
<dbReference type="PhylomeDB" id="P21829"/>
<dbReference type="BioCyc" id="EcoCyc:EG11239-MONOMER"/>
<dbReference type="BioCyc" id="MetaCyc:EG11239-MONOMER"/>
<dbReference type="PRO" id="PR:P21829"/>
<dbReference type="Proteomes" id="UP000000625">
    <property type="component" value="Chromosome"/>
</dbReference>
<dbReference type="GO" id="GO:0005829">
    <property type="term" value="C:cytosol"/>
    <property type="evidence" value="ECO:0000314"/>
    <property type="project" value="EcoCyc"/>
</dbReference>
<dbReference type="GO" id="GO:0000287">
    <property type="term" value="F:magnesium ion binding"/>
    <property type="evidence" value="ECO:0000314"/>
    <property type="project" value="EcoliWiki"/>
</dbReference>
<dbReference type="GO" id="GO:0016791">
    <property type="term" value="F:phosphatase activity"/>
    <property type="evidence" value="ECO:0000314"/>
    <property type="project" value="EcoliWiki"/>
</dbReference>
<dbReference type="GO" id="GO:0016773">
    <property type="term" value="F:phosphotransferase activity, alcohol group as acceptor"/>
    <property type="evidence" value="ECO:0000314"/>
    <property type="project" value="EcoliWiki"/>
</dbReference>
<dbReference type="GO" id="GO:0033883">
    <property type="term" value="F:pyridoxal phosphatase activity"/>
    <property type="evidence" value="ECO:0000314"/>
    <property type="project" value="EcoCyc"/>
</dbReference>
<dbReference type="GO" id="GO:0050308">
    <property type="term" value="F:sugar-phosphatase activity"/>
    <property type="evidence" value="ECO:0000314"/>
    <property type="project" value="EcoliWiki"/>
</dbReference>
<dbReference type="GO" id="GO:0032361">
    <property type="term" value="P:pyridoxal phosphate catabolic process"/>
    <property type="evidence" value="ECO:0000315"/>
    <property type="project" value="EcoCyc"/>
</dbReference>
<dbReference type="CDD" id="cd07516">
    <property type="entry name" value="HAD_Pase"/>
    <property type="match status" value="1"/>
</dbReference>
<dbReference type="FunFam" id="3.30.1240.10:FF:000005">
    <property type="entry name" value="Cof family hydrolase"/>
    <property type="match status" value="1"/>
</dbReference>
<dbReference type="Gene3D" id="3.30.1240.10">
    <property type="match status" value="1"/>
</dbReference>
<dbReference type="Gene3D" id="3.40.50.1000">
    <property type="entry name" value="HAD superfamily/HAD-like"/>
    <property type="match status" value="1"/>
</dbReference>
<dbReference type="InterPro" id="IPR000150">
    <property type="entry name" value="Cof"/>
</dbReference>
<dbReference type="InterPro" id="IPR036412">
    <property type="entry name" value="HAD-like_sf"/>
</dbReference>
<dbReference type="InterPro" id="IPR006379">
    <property type="entry name" value="HAD-SF_hydro_IIB"/>
</dbReference>
<dbReference type="InterPro" id="IPR023214">
    <property type="entry name" value="HAD_sf"/>
</dbReference>
<dbReference type="NCBIfam" id="TIGR00099">
    <property type="entry name" value="Cof-subfamily"/>
    <property type="match status" value="1"/>
</dbReference>
<dbReference type="NCBIfam" id="TIGR01484">
    <property type="entry name" value="HAD-SF-IIB"/>
    <property type="match status" value="1"/>
</dbReference>
<dbReference type="NCBIfam" id="NF007821">
    <property type="entry name" value="PRK10530.1"/>
    <property type="match status" value="1"/>
</dbReference>
<dbReference type="PANTHER" id="PTHR10000">
    <property type="entry name" value="PHOSPHOSERINE PHOSPHATASE"/>
    <property type="match status" value="1"/>
</dbReference>
<dbReference type="PANTHER" id="PTHR10000:SF58">
    <property type="entry name" value="PYRIDOXAL PHOSPHATE PHOSPHATASE YBHA"/>
    <property type="match status" value="1"/>
</dbReference>
<dbReference type="Pfam" id="PF08282">
    <property type="entry name" value="Hydrolase_3"/>
    <property type="match status" value="1"/>
</dbReference>
<dbReference type="SFLD" id="SFLDG01140">
    <property type="entry name" value="C2.B:_Phosphomannomutase_and_P"/>
    <property type="match status" value="1"/>
</dbReference>
<dbReference type="SFLD" id="SFLDS00003">
    <property type="entry name" value="Haloacid_Dehalogenase"/>
    <property type="match status" value="1"/>
</dbReference>
<dbReference type="SUPFAM" id="SSF56784">
    <property type="entry name" value="HAD-like"/>
    <property type="match status" value="1"/>
</dbReference>
<dbReference type="PROSITE" id="PS01228">
    <property type="entry name" value="COF_1"/>
    <property type="match status" value="1"/>
</dbReference>
<dbReference type="PROSITE" id="PS01229">
    <property type="entry name" value="COF_2"/>
    <property type="match status" value="1"/>
</dbReference>
<sequence>MTTRVIALDLDGTLLTPKKTLLPSSIEALARAREAGYQLIIVTGRHHVAIHPFYQALALDTPAICCNGTYLYDYHAKTVLEADPMPVIKALQLIEMLNEHHIHGLMYVDDAMVYEHPTGHVIRTSNWAQTLPPEQRPTFTQVASLAETAQQVNAVWKFALTHDDLPQLQHFGKHVEHELGLECEWSWHDQVDIARGGNSKGKRLTKWVEAQGWSMENVVAFGDNFNDISMLEAAGTGVAMGNADDAVKARANIVIGDNTTDSIAQFIYSHLI</sequence>